<keyword id="KW-0067">ATP-binding</keyword>
<keyword id="KW-0963">Cytoplasm</keyword>
<keyword id="KW-0227">DNA damage</keyword>
<keyword id="KW-0233">DNA recombination</keyword>
<keyword id="KW-0234">DNA repair</keyword>
<keyword id="KW-0238">DNA-binding</keyword>
<keyword id="KW-0547">Nucleotide-binding</keyword>
<keyword id="KW-1185">Reference proteome</keyword>
<keyword id="KW-0742">SOS response</keyword>
<evidence type="ECO:0000255" key="1">
    <source>
        <dbReference type="HAMAP-Rule" id="MF_00268"/>
    </source>
</evidence>
<proteinExistence type="inferred from homology"/>
<comment type="function">
    <text evidence="1">Can catalyze the hydrolysis of ATP in the presence of single-stranded DNA, the ATP-dependent uptake of single-stranded DNA by duplex DNA, and the ATP-dependent hybridization of homologous single-stranded DNAs. It interacts with LexA causing its activation and leading to its autocatalytic cleavage.</text>
</comment>
<comment type="subcellular location">
    <subcellularLocation>
        <location evidence="1">Cytoplasm</location>
    </subcellularLocation>
</comment>
<comment type="similarity">
    <text evidence="1">Belongs to the RecA family.</text>
</comment>
<name>RECA_PSEPK</name>
<accession>Q88ME4</accession>
<dbReference type="EMBL" id="AE015451">
    <property type="protein sequence ID" value="AAN67250.1"/>
    <property type="molecule type" value="Genomic_DNA"/>
</dbReference>
<dbReference type="RefSeq" id="NP_743786.1">
    <property type="nucleotide sequence ID" value="NC_002947.4"/>
</dbReference>
<dbReference type="RefSeq" id="WP_003252365.1">
    <property type="nucleotide sequence ID" value="NZ_CP169744.1"/>
</dbReference>
<dbReference type="SMR" id="Q88ME4"/>
<dbReference type="STRING" id="160488.PP_1629"/>
<dbReference type="PaxDb" id="160488-PP_1629"/>
<dbReference type="GeneID" id="83681893"/>
<dbReference type="KEGG" id="ppu:PP_1629"/>
<dbReference type="PATRIC" id="fig|160488.4.peg.1721"/>
<dbReference type="eggNOG" id="COG0468">
    <property type="taxonomic scope" value="Bacteria"/>
</dbReference>
<dbReference type="HOGENOM" id="CLU_040469_3_2_6"/>
<dbReference type="OrthoDB" id="9776733at2"/>
<dbReference type="PhylomeDB" id="Q88ME4"/>
<dbReference type="BioCyc" id="PPUT160488:G1G01-1727-MONOMER"/>
<dbReference type="Proteomes" id="UP000000556">
    <property type="component" value="Chromosome"/>
</dbReference>
<dbReference type="GO" id="GO:0005829">
    <property type="term" value="C:cytosol"/>
    <property type="evidence" value="ECO:0007669"/>
    <property type="project" value="TreeGrafter"/>
</dbReference>
<dbReference type="GO" id="GO:0005524">
    <property type="term" value="F:ATP binding"/>
    <property type="evidence" value="ECO:0007669"/>
    <property type="project" value="UniProtKB-UniRule"/>
</dbReference>
<dbReference type="GO" id="GO:0016887">
    <property type="term" value="F:ATP hydrolysis activity"/>
    <property type="evidence" value="ECO:0007669"/>
    <property type="project" value="InterPro"/>
</dbReference>
<dbReference type="GO" id="GO:0140664">
    <property type="term" value="F:ATP-dependent DNA damage sensor activity"/>
    <property type="evidence" value="ECO:0007669"/>
    <property type="project" value="InterPro"/>
</dbReference>
<dbReference type="GO" id="GO:0003684">
    <property type="term" value="F:damaged DNA binding"/>
    <property type="evidence" value="ECO:0007669"/>
    <property type="project" value="UniProtKB-UniRule"/>
</dbReference>
<dbReference type="GO" id="GO:0003697">
    <property type="term" value="F:single-stranded DNA binding"/>
    <property type="evidence" value="ECO:0007669"/>
    <property type="project" value="UniProtKB-UniRule"/>
</dbReference>
<dbReference type="GO" id="GO:0006310">
    <property type="term" value="P:DNA recombination"/>
    <property type="evidence" value="ECO:0007669"/>
    <property type="project" value="UniProtKB-UniRule"/>
</dbReference>
<dbReference type="GO" id="GO:0006281">
    <property type="term" value="P:DNA repair"/>
    <property type="evidence" value="ECO:0007669"/>
    <property type="project" value="UniProtKB-UniRule"/>
</dbReference>
<dbReference type="GO" id="GO:0009432">
    <property type="term" value="P:SOS response"/>
    <property type="evidence" value="ECO:0007669"/>
    <property type="project" value="UniProtKB-UniRule"/>
</dbReference>
<dbReference type="CDD" id="cd00983">
    <property type="entry name" value="RecA"/>
    <property type="match status" value="1"/>
</dbReference>
<dbReference type="FunFam" id="3.40.50.300:FF:000087">
    <property type="entry name" value="Recombinase RecA"/>
    <property type="match status" value="1"/>
</dbReference>
<dbReference type="Gene3D" id="3.40.50.300">
    <property type="entry name" value="P-loop containing nucleotide triphosphate hydrolases"/>
    <property type="match status" value="1"/>
</dbReference>
<dbReference type="HAMAP" id="MF_00268">
    <property type="entry name" value="RecA"/>
    <property type="match status" value="1"/>
</dbReference>
<dbReference type="InterPro" id="IPR003593">
    <property type="entry name" value="AAA+_ATPase"/>
</dbReference>
<dbReference type="InterPro" id="IPR013765">
    <property type="entry name" value="DNA_recomb/repair_RecA"/>
</dbReference>
<dbReference type="InterPro" id="IPR020584">
    <property type="entry name" value="DNA_recomb/repair_RecA_CS"/>
</dbReference>
<dbReference type="InterPro" id="IPR027417">
    <property type="entry name" value="P-loop_NTPase"/>
</dbReference>
<dbReference type="InterPro" id="IPR049261">
    <property type="entry name" value="RecA-like_C"/>
</dbReference>
<dbReference type="InterPro" id="IPR049428">
    <property type="entry name" value="RecA-like_N"/>
</dbReference>
<dbReference type="InterPro" id="IPR020588">
    <property type="entry name" value="RecA_ATP-bd"/>
</dbReference>
<dbReference type="InterPro" id="IPR023400">
    <property type="entry name" value="RecA_C_sf"/>
</dbReference>
<dbReference type="InterPro" id="IPR020587">
    <property type="entry name" value="RecA_monomer-monomer_interface"/>
</dbReference>
<dbReference type="NCBIfam" id="TIGR02012">
    <property type="entry name" value="tigrfam_recA"/>
    <property type="match status" value="1"/>
</dbReference>
<dbReference type="PANTHER" id="PTHR45900:SF1">
    <property type="entry name" value="MITOCHONDRIAL DNA REPAIR PROTEIN RECA HOMOLOG-RELATED"/>
    <property type="match status" value="1"/>
</dbReference>
<dbReference type="PANTHER" id="PTHR45900">
    <property type="entry name" value="RECA"/>
    <property type="match status" value="1"/>
</dbReference>
<dbReference type="Pfam" id="PF00154">
    <property type="entry name" value="RecA"/>
    <property type="match status" value="1"/>
</dbReference>
<dbReference type="Pfam" id="PF21096">
    <property type="entry name" value="RecA_C"/>
    <property type="match status" value="1"/>
</dbReference>
<dbReference type="PRINTS" id="PR00142">
    <property type="entry name" value="RECA"/>
</dbReference>
<dbReference type="SMART" id="SM00382">
    <property type="entry name" value="AAA"/>
    <property type="match status" value="1"/>
</dbReference>
<dbReference type="SUPFAM" id="SSF52540">
    <property type="entry name" value="P-loop containing nucleoside triphosphate hydrolases"/>
    <property type="match status" value="1"/>
</dbReference>
<dbReference type="SUPFAM" id="SSF54752">
    <property type="entry name" value="RecA protein, C-terminal domain"/>
    <property type="match status" value="1"/>
</dbReference>
<dbReference type="PROSITE" id="PS00321">
    <property type="entry name" value="RECA_1"/>
    <property type="match status" value="1"/>
</dbReference>
<dbReference type="PROSITE" id="PS50162">
    <property type="entry name" value="RECA_2"/>
    <property type="match status" value="1"/>
</dbReference>
<dbReference type="PROSITE" id="PS50163">
    <property type="entry name" value="RECA_3"/>
    <property type="match status" value="1"/>
</dbReference>
<gene>
    <name evidence="1" type="primary">recA</name>
    <name type="ordered locus">PP_1629</name>
</gene>
<organism>
    <name type="scientific">Pseudomonas putida (strain ATCC 47054 / DSM 6125 / CFBP 8728 / NCIMB 11950 / KT2440)</name>
    <dbReference type="NCBI Taxonomy" id="160488"/>
    <lineage>
        <taxon>Bacteria</taxon>
        <taxon>Pseudomonadati</taxon>
        <taxon>Pseudomonadota</taxon>
        <taxon>Gammaproteobacteria</taxon>
        <taxon>Pseudomonadales</taxon>
        <taxon>Pseudomonadaceae</taxon>
        <taxon>Pseudomonas</taxon>
    </lineage>
</organism>
<reference key="1">
    <citation type="journal article" date="2002" name="Environ. Microbiol.">
        <title>Complete genome sequence and comparative analysis of the metabolically versatile Pseudomonas putida KT2440.</title>
        <authorList>
            <person name="Nelson K.E."/>
            <person name="Weinel C."/>
            <person name="Paulsen I.T."/>
            <person name="Dodson R.J."/>
            <person name="Hilbert H."/>
            <person name="Martins dos Santos V.A.P."/>
            <person name="Fouts D.E."/>
            <person name="Gill S.R."/>
            <person name="Pop M."/>
            <person name="Holmes M."/>
            <person name="Brinkac L.M."/>
            <person name="Beanan M.J."/>
            <person name="DeBoy R.T."/>
            <person name="Daugherty S.C."/>
            <person name="Kolonay J.F."/>
            <person name="Madupu R."/>
            <person name="Nelson W.C."/>
            <person name="White O."/>
            <person name="Peterson J.D."/>
            <person name="Khouri H.M."/>
            <person name="Hance I."/>
            <person name="Chris Lee P."/>
            <person name="Holtzapple E.K."/>
            <person name="Scanlan D."/>
            <person name="Tran K."/>
            <person name="Moazzez A."/>
            <person name="Utterback T.R."/>
            <person name="Rizzo M."/>
            <person name="Lee K."/>
            <person name="Kosack D."/>
            <person name="Moestl D."/>
            <person name="Wedler H."/>
            <person name="Lauber J."/>
            <person name="Stjepandic D."/>
            <person name="Hoheisel J."/>
            <person name="Straetz M."/>
            <person name="Heim S."/>
            <person name="Kiewitz C."/>
            <person name="Eisen J.A."/>
            <person name="Timmis K.N."/>
            <person name="Duesterhoeft A."/>
            <person name="Tuemmler B."/>
            <person name="Fraser C.M."/>
        </authorList>
    </citation>
    <scope>NUCLEOTIDE SEQUENCE [LARGE SCALE GENOMIC DNA]</scope>
    <source>
        <strain>ATCC 47054 / DSM 6125 / CFBP 8728 / NCIMB 11950 / KT2440</strain>
    </source>
</reference>
<feature type="chain" id="PRO_0000122805" description="Protein RecA">
    <location>
        <begin position="1"/>
        <end position="355"/>
    </location>
</feature>
<feature type="binding site" evidence="1">
    <location>
        <begin position="65"/>
        <end position="72"/>
    </location>
    <ligand>
        <name>ATP</name>
        <dbReference type="ChEBI" id="CHEBI:30616"/>
    </ligand>
</feature>
<sequence>MDDNKKRALAAALGQIERQFGKGAVMRMGDHERQGIPAISTGSLGLDIALGIGGLPKGRIVEIYGPESSGKTTLTLSVIAEAQKNGATCAFVDAEHALDPEYAGKLGVNVDDLLVSQPDTGEQALEITDMLVRSNAVDVIIVDSVAALVPKAEIEGEMGDMHVGLQARLMSQALRKITGNIKNANCLVIFINQIRMKIGVMFGSPETTTGGNALKFYASVRLDIRRTGAVKEGDEVVGSETRVKIVKNKVSPPFRQAEFQILYGKGIYRNGEIIDLGVSQGLVEKSGAWYAYQGNKIGQGKANAAKYLAENPAIGAEIEKQIREKLLKAGAAAEAGKAAAAEADADDMADADAGY</sequence>
<protein>
    <recommendedName>
        <fullName evidence="1">Protein RecA</fullName>
    </recommendedName>
    <alternativeName>
        <fullName evidence="1">Recombinase A</fullName>
    </alternativeName>
</protein>